<accession>A3D555</accession>
<evidence type="ECO:0000255" key="1">
    <source>
        <dbReference type="HAMAP-Rule" id="MF_00057"/>
    </source>
</evidence>
<dbReference type="EC" id="2.7.7.90" evidence="1"/>
<dbReference type="EMBL" id="CP000563">
    <property type="protein sequence ID" value="ABN61868.1"/>
    <property type="molecule type" value="Genomic_DNA"/>
</dbReference>
<dbReference type="RefSeq" id="WP_006081834.1">
    <property type="nucleotide sequence ID" value="NC_009052.1"/>
</dbReference>
<dbReference type="SMR" id="A3D555"/>
<dbReference type="STRING" id="325240.Sbal_2375"/>
<dbReference type="KEGG" id="sbl:Sbal_2375"/>
<dbReference type="HOGENOM" id="CLU_065038_0_1_6"/>
<dbReference type="OrthoDB" id="9815559at2"/>
<dbReference type="UniPathway" id="UPA00030"/>
<dbReference type="Proteomes" id="UP000001557">
    <property type="component" value="Chromosome"/>
</dbReference>
<dbReference type="GO" id="GO:0005829">
    <property type="term" value="C:cytosol"/>
    <property type="evidence" value="ECO:0007669"/>
    <property type="project" value="TreeGrafter"/>
</dbReference>
<dbReference type="GO" id="GO:0008690">
    <property type="term" value="F:3-deoxy-manno-octulosonate cytidylyltransferase activity"/>
    <property type="evidence" value="ECO:0007669"/>
    <property type="project" value="InterPro"/>
</dbReference>
<dbReference type="GO" id="GO:0009103">
    <property type="term" value="P:lipopolysaccharide biosynthetic process"/>
    <property type="evidence" value="ECO:0007669"/>
    <property type="project" value="UniProtKB-UniRule"/>
</dbReference>
<dbReference type="CDD" id="cd02517">
    <property type="entry name" value="CMP-KDO-Synthetase"/>
    <property type="match status" value="1"/>
</dbReference>
<dbReference type="FunFam" id="3.90.550.10:FF:000168">
    <property type="entry name" value="8-amino-3,8-dideoxy-manno-octulosonate cytidylyltransferase"/>
    <property type="match status" value="1"/>
</dbReference>
<dbReference type="Gene3D" id="3.90.550.10">
    <property type="entry name" value="Spore Coat Polysaccharide Biosynthesis Protein SpsA, Chain A"/>
    <property type="match status" value="1"/>
</dbReference>
<dbReference type="HAMAP" id="MF_00057">
    <property type="entry name" value="KdsB"/>
    <property type="match status" value="1"/>
</dbReference>
<dbReference type="InterPro" id="IPR003329">
    <property type="entry name" value="Cytidylyl_trans"/>
</dbReference>
<dbReference type="InterPro" id="IPR004528">
    <property type="entry name" value="KdsB"/>
</dbReference>
<dbReference type="InterPro" id="IPR029044">
    <property type="entry name" value="Nucleotide-diphossugar_trans"/>
</dbReference>
<dbReference type="NCBIfam" id="TIGR00466">
    <property type="entry name" value="kdsB"/>
    <property type="match status" value="1"/>
</dbReference>
<dbReference type="NCBIfam" id="NF003950">
    <property type="entry name" value="PRK05450.1-3"/>
    <property type="match status" value="1"/>
</dbReference>
<dbReference type="NCBIfam" id="NF003952">
    <property type="entry name" value="PRK05450.1-5"/>
    <property type="match status" value="1"/>
</dbReference>
<dbReference type="NCBIfam" id="NF009905">
    <property type="entry name" value="PRK13368.1"/>
    <property type="match status" value="1"/>
</dbReference>
<dbReference type="PANTHER" id="PTHR42866">
    <property type="entry name" value="3-DEOXY-MANNO-OCTULOSONATE CYTIDYLYLTRANSFERASE"/>
    <property type="match status" value="1"/>
</dbReference>
<dbReference type="PANTHER" id="PTHR42866:SF2">
    <property type="entry name" value="3-DEOXY-MANNO-OCTULOSONATE CYTIDYLYLTRANSFERASE, MITOCHONDRIAL"/>
    <property type="match status" value="1"/>
</dbReference>
<dbReference type="Pfam" id="PF02348">
    <property type="entry name" value="CTP_transf_3"/>
    <property type="match status" value="1"/>
</dbReference>
<dbReference type="SUPFAM" id="SSF53448">
    <property type="entry name" value="Nucleotide-diphospho-sugar transferases"/>
    <property type="match status" value="1"/>
</dbReference>
<proteinExistence type="inferred from homology"/>
<comment type="function">
    <text evidence="1">Activates KDO8N (a required 8-carbon sugar) for incorporation into bacterial lipopolysaccharide in the Shewanella genus.</text>
</comment>
<comment type="catalytic activity">
    <reaction evidence="1">
        <text>8-amino-3,8-dideoxy-alpha-D-manno-octulosonate + CTP = CMP-8-amino-3,8-dideoxy-alpha-D-manno-oct-2-ulosonate + diphosphate</text>
        <dbReference type="Rhea" id="RHEA:49284"/>
        <dbReference type="ChEBI" id="CHEBI:33019"/>
        <dbReference type="ChEBI" id="CHEBI:37563"/>
        <dbReference type="ChEBI" id="CHEBI:87091"/>
        <dbReference type="ChEBI" id="CHEBI:91089"/>
        <dbReference type="EC" id="2.7.7.90"/>
    </reaction>
</comment>
<comment type="pathway">
    <text evidence="1">Bacterial outer membrane biogenesis; lipopolysaccharide biosynthesis.</text>
</comment>
<comment type="subcellular location">
    <subcellularLocation>
        <location evidence="1">Cytoplasm</location>
    </subcellularLocation>
</comment>
<comment type="similarity">
    <text evidence="1">Belongs to the KdsB family.</text>
</comment>
<gene>
    <name evidence="1" type="primary">kdsB</name>
    <name type="ordered locus">Sbal_2375</name>
</gene>
<organism>
    <name type="scientific">Shewanella baltica (strain OS155 / ATCC BAA-1091)</name>
    <dbReference type="NCBI Taxonomy" id="325240"/>
    <lineage>
        <taxon>Bacteria</taxon>
        <taxon>Pseudomonadati</taxon>
        <taxon>Pseudomonadota</taxon>
        <taxon>Gammaproteobacteria</taxon>
        <taxon>Alteromonadales</taxon>
        <taxon>Shewanellaceae</taxon>
        <taxon>Shewanella</taxon>
    </lineage>
</organism>
<feature type="chain" id="PRO_0000370145" description="8-amino-3,8-dideoxy-manno-octulosonate cytidylyltransferase">
    <location>
        <begin position="1"/>
        <end position="245"/>
    </location>
</feature>
<protein>
    <recommendedName>
        <fullName evidence="1">8-amino-3,8-dideoxy-manno-octulosonate cytidylyltransferase</fullName>
        <ecNumber evidence="1">2.7.7.90</ecNumber>
    </recommendedName>
    <alternativeName>
        <fullName evidence="1">CMP-8-amino-3,8-dideoxy-manno-octulosonate synthase</fullName>
    </alternativeName>
</protein>
<name>KDSB_SHEB5</name>
<reference key="1">
    <citation type="submission" date="2007-02" db="EMBL/GenBank/DDBJ databases">
        <title>Complete sequence of chromosome of Shewanella baltica OS155.</title>
        <authorList>
            <consortium name="US DOE Joint Genome Institute"/>
            <person name="Copeland A."/>
            <person name="Lucas S."/>
            <person name="Lapidus A."/>
            <person name="Barry K."/>
            <person name="Detter J.C."/>
            <person name="Glavina del Rio T."/>
            <person name="Hammon N."/>
            <person name="Israni S."/>
            <person name="Dalin E."/>
            <person name="Tice H."/>
            <person name="Pitluck S."/>
            <person name="Sims D.R."/>
            <person name="Brettin T."/>
            <person name="Bruce D."/>
            <person name="Han C."/>
            <person name="Tapia R."/>
            <person name="Brainard J."/>
            <person name="Schmutz J."/>
            <person name="Larimer F."/>
            <person name="Land M."/>
            <person name="Hauser L."/>
            <person name="Kyrpides N."/>
            <person name="Mikhailova N."/>
            <person name="Brettar I."/>
            <person name="Klappenbach J."/>
            <person name="Konstantinidis K."/>
            <person name="Rodrigues J."/>
            <person name="Tiedje J."/>
            <person name="Richardson P."/>
        </authorList>
    </citation>
    <scope>NUCLEOTIDE SEQUENCE [LARGE SCALE GENOMIC DNA]</scope>
    <source>
        <strain>OS155 / ATCC BAA-1091</strain>
    </source>
</reference>
<sequence length="245" mass="27447">MNVTLLIPARYGSSRFPGKPLAPINGKPMIQHVYERASLAKGLTNIYVATDDDRIKAAVEGFGGKVVMTSPEAASGTDRINDAINQLGLKDDDLVINLQGDQPLIDPTSIEQVISLFERHPGEFEMATLGFEIVNKAELDDPMHVKMVFDNNNYALYFSRSRIPFGRDTQDYPVYKHLGVYAYTRKFVQAFAALPLGRLEDLEKLEQLRALEYGHKIKIAISAFDSIEVDTPEDIRKCEQRLAVD</sequence>
<keyword id="KW-0963">Cytoplasm</keyword>
<keyword id="KW-0448">Lipopolysaccharide biosynthesis</keyword>
<keyword id="KW-0548">Nucleotidyltransferase</keyword>
<keyword id="KW-1185">Reference proteome</keyword>
<keyword id="KW-0808">Transferase</keyword>